<gene>
    <name evidence="1" type="primary">rplE</name>
    <name type="ordered locus">Saro_1261</name>
</gene>
<sequence length="193" mass="21797">MADKYTPRLKGKYDAEIAAAMQAKFGYKNALEIPRIEKITLNMGVGEASQDKKKVTTAAAEMELIAGQKPVITKAKKSIAQFKLREGMPIGCKVTLRRERMYEFLDRLITIAMPRIRDFRGLNPKSFDGRGNYAMGLKEQIIFPEISYDQIEKVRGMDIIVTTTAKTDDEARELLRLFGFPFPQDAAEQQQAA</sequence>
<comment type="function">
    <text evidence="1">This is one of the proteins that bind and probably mediate the attachment of the 5S RNA into the large ribosomal subunit, where it forms part of the central protuberance. In the 70S ribosome it contacts protein S13 of the 30S subunit (bridge B1b), connecting the 2 subunits; this bridge is implicated in subunit movement. Contacts the P site tRNA; the 5S rRNA and some of its associated proteins might help stabilize positioning of ribosome-bound tRNAs.</text>
</comment>
<comment type="subunit">
    <text evidence="1">Part of the 50S ribosomal subunit; part of the 5S rRNA/L5/L18/L25 subcomplex. Contacts the 5S rRNA and the P site tRNA. Forms a bridge to the 30S subunit in the 70S ribosome.</text>
</comment>
<comment type="similarity">
    <text evidence="1">Belongs to the universal ribosomal protein uL5 family.</text>
</comment>
<proteinExistence type="inferred from homology"/>
<organism>
    <name type="scientific">Novosphingobium aromaticivorans (strain ATCC 700278 / DSM 12444 / CCUG 56034 / CIP 105152 / NBRC 16084 / F199)</name>
    <dbReference type="NCBI Taxonomy" id="279238"/>
    <lineage>
        <taxon>Bacteria</taxon>
        <taxon>Pseudomonadati</taxon>
        <taxon>Pseudomonadota</taxon>
        <taxon>Alphaproteobacteria</taxon>
        <taxon>Sphingomonadales</taxon>
        <taxon>Sphingomonadaceae</taxon>
        <taxon>Novosphingobium</taxon>
    </lineage>
</organism>
<protein>
    <recommendedName>
        <fullName evidence="1">Large ribosomal subunit protein uL5</fullName>
    </recommendedName>
    <alternativeName>
        <fullName evidence="2">50S ribosomal protein L5</fullName>
    </alternativeName>
</protein>
<accession>Q2G8W8</accession>
<keyword id="KW-1185">Reference proteome</keyword>
<keyword id="KW-0687">Ribonucleoprotein</keyword>
<keyword id="KW-0689">Ribosomal protein</keyword>
<keyword id="KW-0694">RNA-binding</keyword>
<keyword id="KW-0699">rRNA-binding</keyword>
<keyword id="KW-0820">tRNA-binding</keyword>
<reference key="1">
    <citation type="submission" date="2006-01" db="EMBL/GenBank/DDBJ databases">
        <title>Complete sequence of Novosphingobium aromaticivorans DSM 12444.</title>
        <authorList>
            <consortium name="US DOE Joint Genome Institute"/>
            <person name="Copeland A."/>
            <person name="Lucas S."/>
            <person name="Lapidus A."/>
            <person name="Barry K."/>
            <person name="Detter J.C."/>
            <person name="Glavina T."/>
            <person name="Hammon N."/>
            <person name="Israni S."/>
            <person name="Pitluck S."/>
            <person name="Chain P."/>
            <person name="Malfatti S."/>
            <person name="Shin M."/>
            <person name="Vergez L."/>
            <person name="Schmutz J."/>
            <person name="Larimer F."/>
            <person name="Land M."/>
            <person name="Kyrpides N."/>
            <person name="Ivanova N."/>
            <person name="Fredrickson J."/>
            <person name="Balkwill D."/>
            <person name="Romine M.F."/>
            <person name="Richardson P."/>
        </authorList>
    </citation>
    <scope>NUCLEOTIDE SEQUENCE [LARGE SCALE GENOMIC DNA]</scope>
    <source>
        <strain>ATCC 700278 / DSM 12444 / CCUG 56034 / CIP 105152 / NBRC 16084 / F199</strain>
    </source>
</reference>
<evidence type="ECO:0000255" key="1">
    <source>
        <dbReference type="HAMAP-Rule" id="MF_01333"/>
    </source>
</evidence>
<evidence type="ECO:0000305" key="2"/>
<dbReference type="EMBL" id="CP000248">
    <property type="protein sequence ID" value="ABD25705.1"/>
    <property type="molecule type" value="Genomic_DNA"/>
</dbReference>
<dbReference type="RefSeq" id="WP_011444919.1">
    <property type="nucleotide sequence ID" value="NC_007794.1"/>
</dbReference>
<dbReference type="SMR" id="Q2G8W8"/>
<dbReference type="STRING" id="279238.Saro_1261"/>
<dbReference type="KEGG" id="nar:Saro_1261"/>
<dbReference type="eggNOG" id="COG0094">
    <property type="taxonomic scope" value="Bacteria"/>
</dbReference>
<dbReference type="HOGENOM" id="CLU_061015_2_1_5"/>
<dbReference type="Proteomes" id="UP000009134">
    <property type="component" value="Chromosome"/>
</dbReference>
<dbReference type="GO" id="GO:1990904">
    <property type="term" value="C:ribonucleoprotein complex"/>
    <property type="evidence" value="ECO:0007669"/>
    <property type="project" value="UniProtKB-KW"/>
</dbReference>
<dbReference type="GO" id="GO:0005840">
    <property type="term" value="C:ribosome"/>
    <property type="evidence" value="ECO:0007669"/>
    <property type="project" value="UniProtKB-KW"/>
</dbReference>
<dbReference type="GO" id="GO:0019843">
    <property type="term" value="F:rRNA binding"/>
    <property type="evidence" value="ECO:0007669"/>
    <property type="project" value="UniProtKB-UniRule"/>
</dbReference>
<dbReference type="GO" id="GO:0003735">
    <property type="term" value="F:structural constituent of ribosome"/>
    <property type="evidence" value="ECO:0007669"/>
    <property type="project" value="InterPro"/>
</dbReference>
<dbReference type="GO" id="GO:0000049">
    <property type="term" value="F:tRNA binding"/>
    <property type="evidence" value="ECO:0007669"/>
    <property type="project" value="UniProtKB-UniRule"/>
</dbReference>
<dbReference type="GO" id="GO:0006412">
    <property type="term" value="P:translation"/>
    <property type="evidence" value="ECO:0007669"/>
    <property type="project" value="UniProtKB-UniRule"/>
</dbReference>
<dbReference type="FunFam" id="3.30.1440.10:FF:000001">
    <property type="entry name" value="50S ribosomal protein L5"/>
    <property type="match status" value="1"/>
</dbReference>
<dbReference type="Gene3D" id="3.30.1440.10">
    <property type="match status" value="1"/>
</dbReference>
<dbReference type="HAMAP" id="MF_01333_B">
    <property type="entry name" value="Ribosomal_uL5_B"/>
    <property type="match status" value="1"/>
</dbReference>
<dbReference type="InterPro" id="IPR002132">
    <property type="entry name" value="Ribosomal_uL5"/>
</dbReference>
<dbReference type="InterPro" id="IPR020930">
    <property type="entry name" value="Ribosomal_uL5_bac-type"/>
</dbReference>
<dbReference type="InterPro" id="IPR031309">
    <property type="entry name" value="Ribosomal_uL5_C"/>
</dbReference>
<dbReference type="InterPro" id="IPR020929">
    <property type="entry name" value="Ribosomal_uL5_CS"/>
</dbReference>
<dbReference type="InterPro" id="IPR022803">
    <property type="entry name" value="Ribosomal_uL5_dom_sf"/>
</dbReference>
<dbReference type="InterPro" id="IPR031310">
    <property type="entry name" value="Ribosomal_uL5_N"/>
</dbReference>
<dbReference type="NCBIfam" id="NF000585">
    <property type="entry name" value="PRK00010.1"/>
    <property type="match status" value="1"/>
</dbReference>
<dbReference type="PANTHER" id="PTHR11994">
    <property type="entry name" value="60S RIBOSOMAL PROTEIN L11-RELATED"/>
    <property type="match status" value="1"/>
</dbReference>
<dbReference type="Pfam" id="PF00281">
    <property type="entry name" value="Ribosomal_L5"/>
    <property type="match status" value="1"/>
</dbReference>
<dbReference type="Pfam" id="PF00673">
    <property type="entry name" value="Ribosomal_L5_C"/>
    <property type="match status" value="1"/>
</dbReference>
<dbReference type="PIRSF" id="PIRSF002161">
    <property type="entry name" value="Ribosomal_L5"/>
    <property type="match status" value="1"/>
</dbReference>
<dbReference type="SUPFAM" id="SSF55282">
    <property type="entry name" value="RL5-like"/>
    <property type="match status" value="1"/>
</dbReference>
<dbReference type="PROSITE" id="PS00358">
    <property type="entry name" value="RIBOSOMAL_L5"/>
    <property type="match status" value="1"/>
</dbReference>
<feature type="chain" id="PRO_0000243033" description="Large ribosomal subunit protein uL5">
    <location>
        <begin position="1"/>
        <end position="193"/>
    </location>
</feature>
<name>RL5_NOVAD</name>